<evidence type="ECO:0000250" key="1">
    <source>
        <dbReference type="UniProtKB" id="P14174"/>
    </source>
</evidence>
<evidence type="ECO:0000250" key="2">
    <source>
        <dbReference type="UniProtKB" id="P34884"/>
    </source>
</evidence>
<evidence type="ECO:0000305" key="3"/>
<keyword id="KW-0007">Acetylation</keyword>
<keyword id="KW-0202">Cytokine</keyword>
<keyword id="KW-0963">Cytoplasm</keyword>
<keyword id="KW-0391">Immunity</keyword>
<keyword id="KW-0395">Inflammatory response</keyword>
<keyword id="KW-0399">Innate immunity</keyword>
<keyword id="KW-0413">Isomerase</keyword>
<keyword id="KW-1185">Reference proteome</keyword>
<keyword id="KW-0964">Secreted</keyword>
<name>MIF_SHEEP</name>
<protein>
    <recommendedName>
        <fullName>Macrophage migration inhibitory factor</fullName>
        <shortName>MIF</shortName>
        <ecNumber evidence="1">5.3.2.1</ecNumber>
    </recommendedName>
    <alternativeName>
        <fullName>L-dopachrome isomerase</fullName>
    </alternativeName>
    <alternativeName>
        <fullName>L-dopachrome tautomerase</fullName>
        <ecNumber evidence="1">5.3.3.12</ecNumber>
    </alternativeName>
    <alternativeName>
        <fullName>Phenylpyruvate tautomerase</fullName>
    </alternativeName>
</protein>
<proteinExistence type="inferred from homology"/>
<dbReference type="EC" id="5.3.2.1" evidence="1"/>
<dbReference type="EC" id="5.3.3.12" evidence="1"/>
<dbReference type="EMBL" id="DQ414692">
    <property type="protein sequence ID" value="ABD67167.1"/>
    <property type="molecule type" value="mRNA"/>
</dbReference>
<dbReference type="RefSeq" id="NP_001072123.1">
    <property type="nucleotide sequence ID" value="NM_001078655.1"/>
</dbReference>
<dbReference type="SMR" id="Q1ZZU7"/>
<dbReference type="Ensembl" id="ENSOART00040018092">
    <property type="protein sequence ID" value="ENSOARP00040008734"/>
    <property type="gene ID" value="ENSOARG00040011251"/>
</dbReference>
<dbReference type="Ensembl" id="ENSOART00180041326">
    <property type="protein sequence ID" value="ENSOARP00180021188"/>
    <property type="gene ID" value="ENSOARG00180024986"/>
</dbReference>
<dbReference type="Ensembl" id="ENSOART00225052523">
    <property type="protein sequence ID" value="ENSOARP00225026469"/>
    <property type="gene ID" value="ENSOARG00225031751"/>
</dbReference>
<dbReference type="GeneID" id="780466"/>
<dbReference type="KEGG" id="oas:780466"/>
<dbReference type="CTD" id="4282"/>
<dbReference type="OrthoDB" id="255819at2759"/>
<dbReference type="Proteomes" id="UP000002356">
    <property type="component" value="Unplaced"/>
</dbReference>
<dbReference type="GO" id="GO:0009986">
    <property type="term" value="C:cell surface"/>
    <property type="evidence" value="ECO:0007669"/>
    <property type="project" value="Ensembl"/>
</dbReference>
<dbReference type="GO" id="GO:0005829">
    <property type="term" value="C:cytosol"/>
    <property type="evidence" value="ECO:0007669"/>
    <property type="project" value="Ensembl"/>
</dbReference>
<dbReference type="GO" id="GO:0005615">
    <property type="term" value="C:extracellular space"/>
    <property type="evidence" value="ECO:0007669"/>
    <property type="project" value="UniProtKB-KW"/>
</dbReference>
<dbReference type="GO" id="GO:0005654">
    <property type="term" value="C:nucleoplasm"/>
    <property type="evidence" value="ECO:0007669"/>
    <property type="project" value="Ensembl"/>
</dbReference>
<dbReference type="GO" id="GO:0005886">
    <property type="term" value="C:plasma membrane"/>
    <property type="evidence" value="ECO:0007669"/>
    <property type="project" value="Ensembl"/>
</dbReference>
<dbReference type="GO" id="GO:0042056">
    <property type="term" value="F:chemoattractant activity"/>
    <property type="evidence" value="ECO:0007669"/>
    <property type="project" value="Ensembl"/>
</dbReference>
<dbReference type="GO" id="GO:0005125">
    <property type="term" value="F:cytokine activity"/>
    <property type="evidence" value="ECO:0007669"/>
    <property type="project" value="UniProtKB-KW"/>
</dbReference>
<dbReference type="GO" id="GO:0005126">
    <property type="term" value="F:cytokine receptor binding"/>
    <property type="evidence" value="ECO:0007669"/>
    <property type="project" value="Ensembl"/>
</dbReference>
<dbReference type="GO" id="GO:0004167">
    <property type="term" value="F:dopachrome isomerase activity"/>
    <property type="evidence" value="ECO:0000250"/>
    <property type="project" value="UniProtKB"/>
</dbReference>
<dbReference type="GO" id="GO:0042802">
    <property type="term" value="F:identical protein binding"/>
    <property type="evidence" value="ECO:0007669"/>
    <property type="project" value="Ensembl"/>
</dbReference>
<dbReference type="GO" id="GO:0050178">
    <property type="term" value="F:phenylpyruvate tautomerase activity"/>
    <property type="evidence" value="ECO:0007669"/>
    <property type="project" value="UniProtKB-EC"/>
</dbReference>
<dbReference type="GO" id="GO:0002020">
    <property type="term" value="F:protease binding"/>
    <property type="evidence" value="ECO:0007669"/>
    <property type="project" value="Ensembl"/>
</dbReference>
<dbReference type="GO" id="GO:0007166">
    <property type="term" value="P:cell surface receptor signaling pathway"/>
    <property type="evidence" value="ECO:0007669"/>
    <property type="project" value="Ensembl"/>
</dbReference>
<dbReference type="GO" id="GO:0090398">
    <property type="term" value="P:cellular senescence"/>
    <property type="evidence" value="ECO:0007669"/>
    <property type="project" value="Ensembl"/>
</dbReference>
<dbReference type="GO" id="GO:0030330">
    <property type="term" value="P:DNA damage response, signal transduction by p53 class mediator"/>
    <property type="evidence" value="ECO:0007669"/>
    <property type="project" value="Ensembl"/>
</dbReference>
<dbReference type="GO" id="GO:0006954">
    <property type="term" value="P:inflammatory response"/>
    <property type="evidence" value="ECO:0007669"/>
    <property type="project" value="UniProtKB-KW"/>
</dbReference>
<dbReference type="GO" id="GO:0045087">
    <property type="term" value="P:innate immune response"/>
    <property type="evidence" value="ECO:0007669"/>
    <property type="project" value="UniProtKB-KW"/>
</dbReference>
<dbReference type="GO" id="GO:2000773">
    <property type="term" value="P:negative regulation of cellular senescence"/>
    <property type="evidence" value="ECO:0007669"/>
    <property type="project" value="Ensembl"/>
</dbReference>
<dbReference type="GO" id="GO:0043518">
    <property type="term" value="P:negative regulation of DNA damage response, signal transduction by p53 class mediator"/>
    <property type="evidence" value="ECO:0007669"/>
    <property type="project" value="Ensembl"/>
</dbReference>
<dbReference type="GO" id="GO:0010629">
    <property type="term" value="P:negative regulation of gene expression"/>
    <property type="evidence" value="ECO:0007669"/>
    <property type="project" value="Ensembl"/>
</dbReference>
<dbReference type="GO" id="GO:1902166">
    <property type="term" value="P:negative regulation of intrinsic apoptotic signaling pathway in response to DNA damage by p53 class mediator"/>
    <property type="evidence" value="ECO:0007669"/>
    <property type="project" value="Ensembl"/>
</dbReference>
<dbReference type="GO" id="GO:0010760">
    <property type="term" value="P:negative regulation of macrophage chemotaxis"/>
    <property type="evidence" value="ECO:0007669"/>
    <property type="project" value="Ensembl"/>
</dbReference>
<dbReference type="GO" id="GO:0002906">
    <property type="term" value="P:negative regulation of mature B cell apoptotic process"/>
    <property type="evidence" value="ECO:0007669"/>
    <property type="project" value="Ensembl"/>
</dbReference>
<dbReference type="GO" id="GO:0033033">
    <property type="term" value="P:negative regulation of myeloid cell apoptotic process"/>
    <property type="evidence" value="ECO:0007669"/>
    <property type="project" value="Ensembl"/>
</dbReference>
<dbReference type="GO" id="GO:0051248">
    <property type="term" value="P:negative regulation of protein metabolic process"/>
    <property type="evidence" value="ECO:0007669"/>
    <property type="project" value="Ensembl"/>
</dbReference>
<dbReference type="GO" id="GO:0090238">
    <property type="term" value="P:positive regulation of arachidonate secretion"/>
    <property type="evidence" value="ECO:0007669"/>
    <property type="project" value="Ensembl"/>
</dbReference>
<dbReference type="GO" id="GO:0030890">
    <property type="term" value="P:positive regulation of B cell proliferation"/>
    <property type="evidence" value="ECO:0007669"/>
    <property type="project" value="Ensembl"/>
</dbReference>
<dbReference type="GO" id="GO:0141163">
    <property type="term" value="P:positive regulation of cAMP/PKA signal transduction"/>
    <property type="evidence" value="ECO:0007669"/>
    <property type="project" value="Ensembl"/>
</dbReference>
<dbReference type="GO" id="GO:2000343">
    <property type="term" value="P:positive regulation of chemokine (C-X-C motif) ligand 2 production"/>
    <property type="evidence" value="ECO:0007669"/>
    <property type="project" value="Ensembl"/>
</dbReference>
<dbReference type="GO" id="GO:0070374">
    <property type="term" value="P:positive regulation of ERK1 and ERK2 cascade"/>
    <property type="evidence" value="ECO:0007669"/>
    <property type="project" value="Ensembl"/>
</dbReference>
<dbReference type="GO" id="GO:0048146">
    <property type="term" value="P:positive regulation of fibroblast proliferation"/>
    <property type="evidence" value="ECO:0007669"/>
    <property type="project" value="Ensembl"/>
</dbReference>
<dbReference type="GO" id="GO:0031666">
    <property type="term" value="P:positive regulation of lipopolysaccharide-mediated signaling pathway"/>
    <property type="evidence" value="ECO:0007669"/>
    <property type="project" value="Ensembl"/>
</dbReference>
<dbReference type="GO" id="GO:0061081">
    <property type="term" value="P:positive regulation of myeloid leukocyte cytokine production involved in immune response"/>
    <property type="evidence" value="ECO:0007669"/>
    <property type="project" value="Ensembl"/>
</dbReference>
<dbReference type="GO" id="GO:0042327">
    <property type="term" value="P:positive regulation of phosphorylation"/>
    <property type="evidence" value="ECO:0007669"/>
    <property type="project" value="Ensembl"/>
</dbReference>
<dbReference type="GO" id="GO:0061078">
    <property type="term" value="P:positive regulation of prostaglandin secretion involved in immune response"/>
    <property type="evidence" value="ECO:0007669"/>
    <property type="project" value="Ensembl"/>
</dbReference>
<dbReference type="GO" id="GO:0032760">
    <property type="term" value="P:positive regulation of tumor necrosis factor production"/>
    <property type="evidence" value="ECO:0007669"/>
    <property type="project" value="Ensembl"/>
</dbReference>
<dbReference type="GO" id="GO:0001516">
    <property type="term" value="P:prostaglandin biosynthetic process"/>
    <property type="evidence" value="ECO:0007669"/>
    <property type="project" value="Ensembl"/>
</dbReference>
<dbReference type="GO" id="GO:0070207">
    <property type="term" value="P:protein homotrimerization"/>
    <property type="evidence" value="ECO:0007669"/>
    <property type="project" value="Ensembl"/>
</dbReference>
<dbReference type="FunFam" id="3.30.429.10:FF:000001">
    <property type="entry name" value="Macrophage migration inhibitory factor"/>
    <property type="match status" value="1"/>
</dbReference>
<dbReference type="Gene3D" id="3.30.429.10">
    <property type="entry name" value="Macrophage Migration Inhibitory Factor"/>
    <property type="match status" value="1"/>
</dbReference>
<dbReference type="InterPro" id="IPR001398">
    <property type="entry name" value="Macrophage_inhib_fac"/>
</dbReference>
<dbReference type="InterPro" id="IPR019829">
    <property type="entry name" value="Macrophage_inhib_fac_CS"/>
</dbReference>
<dbReference type="InterPro" id="IPR014347">
    <property type="entry name" value="Tautomerase/MIF_sf"/>
</dbReference>
<dbReference type="PANTHER" id="PTHR11954">
    <property type="entry name" value="D-DOPACHROME DECARBOXYLASE"/>
    <property type="match status" value="1"/>
</dbReference>
<dbReference type="PANTHER" id="PTHR11954:SF6">
    <property type="entry name" value="MACROPHAGE MIGRATION INHIBITORY FACTOR"/>
    <property type="match status" value="1"/>
</dbReference>
<dbReference type="Pfam" id="PF01187">
    <property type="entry name" value="MIF"/>
    <property type="match status" value="1"/>
</dbReference>
<dbReference type="SUPFAM" id="SSF55331">
    <property type="entry name" value="Tautomerase/MIF"/>
    <property type="match status" value="1"/>
</dbReference>
<dbReference type="PROSITE" id="PS01158">
    <property type="entry name" value="MIF"/>
    <property type="match status" value="1"/>
</dbReference>
<reference key="1">
    <citation type="submission" date="2006-02" db="EMBL/GenBank/DDBJ databases">
        <title>The entire coding sequence of sheep macrophage migration inhibitory factor.</title>
        <authorList>
            <person name="Lopes F."/>
            <person name="Ptak G."/>
            <person name="Arcuri F."/>
        </authorList>
    </citation>
    <scope>NUCLEOTIDE SEQUENCE [MRNA]</scope>
    <source>
        <tissue>Placenta</tissue>
    </source>
</reference>
<accession>Q1ZZU7</accession>
<feature type="initiator methionine" description="Removed" evidence="1">
    <location>
        <position position="1"/>
    </location>
</feature>
<feature type="chain" id="PRO_0000344369" description="Macrophage migration inhibitory factor">
    <location>
        <begin position="2"/>
        <end position="115"/>
    </location>
</feature>
<feature type="active site" description="Proton acceptor; via imino nitrogen" evidence="2">
    <location>
        <position position="2"/>
    </location>
</feature>
<feature type="binding site" evidence="1">
    <location>
        <position position="33"/>
    </location>
    <ligand>
        <name>substrate</name>
    </ligand>
</feature>
<feature type="binding site" evidence="1">
    <location>
        <position position="65"/>
    </location>
    <ligand>
        <name>substrate</name>
    </ligand>
</feature>
<feature type="binding site" evidence="1">
    <location>
        <position position="98"/>
    </location>
    <ligand>
        <name>substrate</name>
    </ligand>
</feature>
<feature type="modified residue" description="N6-acetyllysine; alternate" evidence="1">
    <location>
        <position position="78"/>
    </location>
</feature>
<feature type="modified residue" description="N6-succinyllysine; alternate" evidence="2">
    <location>
        <position position="78"/>
    </location>
</feature>
<comment type="function">
    <text evidence="1">Pro-inflammatory cytokine involved in the innate immune response to bacterial pathogens. The expression of MIF at sites of inflammation suggests a role as mediator in regulating the function of macrophages in host defense. Counteracts the anti-inflammatory activity of glucocorticoids. Has phenylpyruvate tautomerase and dopachrome tautomerase activity (in vitro), but the physiological substrate is not known. It is not clear whether the tautomerase activity has any physiological relevance, and whether it is important for cytokine activity.</text>
</comment>
<comment type="catalytic activity">
    <reaction evidence="1">
        <text>3-phenylpyruvate = enol-phenylpyruvate</text>
        <dbReference type="Rhea" id="RHEA:17097"/>
        <dbReference type="ChEBI" id="CHEBI:16815"/>
        <dbReference type="ChEBI" id="CHEBI:18005"/>
        <dbReference type="EC" id="5.3.2.1"/>
    </reaction>
</comment>
<comment type="catalytic activity">
    <reaction evidence="1">
        <text>L-dopachrome = 5,6-dihydroxyindole-2-carboxylate</text>
        <dbReference type="Rhea" id="RHEA:13041"/>
        <dbReference type="ChEBI" id="CHEBI:16875"/>
        <dbReference type="ChEBI" id="CHEBI:57509"/>
        <dbReference type="EC" id="5.3.3.12"/>
    </reaction>
</comment>
<comment type="subunit">
    <text evidence="1 2">Homotrimer (By similarity). Interacts with CXCR2 extracellular domain (By similarity). Interacts with the CD74 extracellular domain, USO1, COPS5 and BNIPL (By similarity).</text>
</comment>
<comment type="subcellular location">
    <subcellularLocation>
        <location evidence="1">Secreted</location>
    </subcellularLocation>
    <subcellularLocation>
        <location evidence="1">Cytoplasm</location>
    </subcellularLocation>
    <text evidence="1">Does not have a cleavable signal sequence and is secreted via a specialized, non-classical pathway. Secreted by macrophages upon stimulation by bacterial lipopolysaccharide (LPS), or by M.tuberculosis antigens.</text>
</comment>
<comment type="similarity">
    <text evidence="3">Belongs to the MIF family.</text>
</comment>
<gene>
    <name type="primary">MIF</name>
</gene>
<sequence>MPMFVVNTNVPRASVPDGLLSELTQQLAQATGKPAQYIAVHVVPDQLMTFGGSSEPCALCSLHSIGKIGGAQNRSYSKLLCGLLTERLRISPDRIYINFCDMNAANVGWNGSTFA</sequence>
<organism>
    <name type="scientific">Ovis aries</name>
    <name type="common">Sheep</name>
    <dbReference type="NCBI Taxonomy" id="9940"/>
    <lineage>
        <taxon>Eukaryota</taxon>
        <taxon>Metazoa</taxon>
        <taxon>Chordata</taxon>
        <taxon>Craniata</taxon>
        <taxon>Vertebrata</taxon>
        <taxon>Euteleostomi</taxon>
        <taxon>Mammalia</taxon>
        <taxon>Eutheria</taxon>
        <taxon>Laurasiatheria</taxon>
        <taxon>Artiodactyla</taxon>
        <taxon>Ruminantia</taxon>
        <taxon>Pecora</taxon>
        <taxon>Bovidae</taxon>
        <taxon>Caprinae</taxon>
        <taxon>Ovis</taxon>
    </lineage>
</organism>